<dbReference type="EMBL" id="AC002304">
    <property type="protein sequence ID" value="AAF79340.1"/>
    <property type="status" value="ALT_SEQ"/>
    <property type="molecule type" value="Genomic_DNA"/>
</dbReference>
<dbReference type="EMBL" id="AC002304">
    <property type="protein sequence ID" value="AAF79341.1"/>
    <property type="status" value="ALT_SEQ"/>
    <property type="molecule type" value="Genomic_DNA"/>
</dbReference>
<dbReference type="EMBL" id="AC002328">
    <property type="protein sequence ID" value="AAF79501.1"/>
    <property type="status" value="ALT_SEQ"/>
    <property type="molecule type" value="Genomic_DNA"/>
</dbReference>
<dbReference type="EMBL" id="CP002684">
    <property type="protein sequence ID" value="AEE33296.2"/>
    <property type="status" value="ALT_SEQ"/>
    <property type="molecule type" value="Genomic_DNA"/>
</dbReference>
<dbReference type="RefSeq" id="NP_564700.3">
    <property type="nucleotide sequence ID" value="NM_104455.4"/>
</dbReference>
<dbReference type="PaxDb" id="3702-AT1G55790.1"/>
<dbReference type="ProteomicsDB" id="230241"/>
<dbReference type="GeneID" id="842028"/>
<dbReference type="KEGG" id="ath:AT1G55790"/>
<dbReference type="Araport" id="AT1G55790"/>
<dbReference type="TAIR" id="AT1G55790"/>
<dbReference type="eggNOG" id="KOG4174">
    <property type="taxonomic scope" value="Eukaryota"/>
</dbReference>
<dbReference type="HOGENOM" id="CLU_529320_0_0_1"/>
<dbReference type="InParanoid" id="F4I1X0"/>
<dbReference type="PRO" id="PR:F4I1X0"/>
<dbReference type="Proteomes" id="UP000006548">
    <property type="component" value="Chromosome 1"/>
</dbReference>
<dbReference type="ExpressionAtlas" id="F4I1X0">
    <property type="expression patterns" value="baseline and differential"/>
</dbReference>
<dbReference type="GO" id="GO:0005737">
    <property type="term" value="C:cytoplasm"/>
    <property type="evidence" value="ECO:0000318"/>
    <property type="project" value="GO_Central"/>
</dbReference>
<dbReference type="GO" id="GO:0046872">
    <property type="term" value="F:metal ion binding"/>
    <property type="evidence" value="ECO:0007669"/>
    <property type="project" value="UniProtKB-KW"/>
</dbReference>
<dbReference type="GO" id="GO:0070042">
    <property type="term" value="F:rRNA (uridine-N3-)-methyltransferase activity"/>
    <property type="evidence" value="ECO:0000318"/>
    <property type="project" value="GO_Central"/>
</dbReference>
<dbReference type="GO" id="GO:0070475">
    <property type="term" value="P:rRNA base methylation"/>
    <property type="evidence" value="ECO:0000318"/>
    <property type="project" value="GO_Central"/>
</dbReference>
<dbReference type="FunFam" id="3.30.70.100:FF:000095">
    <property type="entry name" value="Disease resistance protein RGA5"/>
    <property type="match status" value="1"/>
</dbReference>
<dbReference type="FunFam" id="3.40.50.150:FF:000440">
    <property type="entry name" value="Os09g0479300 protein"/>
    <property type="match status" value="1"/>
</dbReference>
<dbReference type="Gene3D" id="3.30.70.100">
    <property type="match status" value="1"/>
</dbReference>
<dbReference type="Gene3D" id="3.40.50.150">
    <property type="entry name" value="Vaccinia Virus protein VP39"/>
    <property type="match status" value="1"/>
</dbReference>
<dbReference type="InterPro" id="IPR019446">
    <property type="entry name" value="BMT5-like"/>
</dbReference>
<dbReference type="InterPro" id="IPR006121">
    <property type="entry name" value="HMA_dom"/>
</dbReference>
<dbReference type="InterPro" id="IPR029063">
    <property type="entry name" value="SAM-dependent_MTases_sf"/>
</dbReference>
<dbReference type="PANTHER" id="PTHR11538:SF26">
    <property type="entry name" value="FERREDOXIN-FOLD ANTICODON-BINDING DOMAIN-CONTAINING PROTEIN 1"/>
    <property type="match status" value="1"/>
</dbReference>
<dbReference type="PANTHER" id="PTHR11538">
    <property type="entry name" value="PHENYLALANYL-TRNA SYNTHETASE"/>
    <property type="match status" value="1"/>
</dbReference>
<dbReference type="Pfam" id="PF10354">
    <property type="entry name" value="BMT5-like"/>
    <property type="match status" value="1"/>
</dbReference>
<dbReference type="SUPFAM" id="SSF53335">
    <property type="entry name" value="S-adenosyl-L-methionine-dependent methyltransferases"/>
    <property type="match status" value="1"/>
</dbReference>
<dbReference type="PROSITE" id="PS50846">
    <property type="entry name" value="HMA_2"/>
    <property type="match status" value="1"/>
</dbReference>
<name>HIP41_ARATH</name>
<sequence>MAMRELSQLNRDSDGDEEVWVKHYSSNHQILLVGEGDFSFSHSLATLFGSASNICASSLDSYDVVVRKYKKARSNLKTLKRLGALLLHGVDATTLHFHPDLRYRRFDRVIFNFPHAGFHGRESDSSLIRKHRELVFGFFNGASRLLRANGEVHVSHKNKAPFSEWNLEELASRCFLVLIQRVAFEKNNYPGYENKRGDGRRCDQPFLLGECSTFKFRFSRVAKELYAEKVRSREVKERESMYPEAILNKQPVSFDHRYRLQTEFEAIAGTITLGKSKILWLSQEKGHLHWIFVTTKNVDVYSSKIPVFLICTLESRQRDIACFVKTFQFKLVKNHYPNTLTAGVEFLVKFITGKYEECQQVTYLRKNFSGYGDGNKQRIVLKMDMSDEKSMKKAMKIASAKPGVRSVSIQGQNDQLVLLGEGIDLAELTRELKKKVCMTTIITVQAAPPQQPPQPHPMGQYNQMPPARRCTCEIPNSGFCGFCRSMSQPNYQVVPSPYYPPMLYCRDETDGCRIL</sequence>
<reference key="1">
    <citation type="journal article" date="2000" name="Nature">
        <title>Sequence and analysis of chromosome 1 of the plant Arabidopsis thaliana.</title>
        <authorList>
            <person name="Theologis A."/>
            <person name="Ecker J.R."/>
            <person name="Palm C.J."/>
            <person name="Federspiel N.A."/>
            <person name="Kaul S."/>
            <person name="White O."/>
            <person name="Alonso J."/>
            <person name="Altafi H."/>
            <person name="Araujo R."/>
            <person name="Bowman C.L."/>
            <person name="Brooks S.Y."/>
            <person name="Buehler E."/>
            <person name="Chan A."/>
            <person name="Chao Q."/>
            <person name="Chen H."/>
            <person name="Cheuk R.F."/>
            <person name="Chin C.W."/>
            <person name="Chung M.K."/>
            <person name="Conn L."/>
            <person name="Conway A.B."/>
            <person name="Conway A.R."/>
            <person name="Creasy T.H."/>
            <person name="Dewar K."/>
            <person name="Dunn P."/>
            <person name="Etgu P."/>
            <person name="Feldblyum T.V."/>
            <person name="Feng J.-D."/>
            <person name="Fong B."/>
            <person name="Fujii C.Y."/>
            <person name="Gill J.E."/>
            <person name="Goldsmith A.D."/>
            <person name="Haas B."/>
            <person name="Hansen N.F."/>
            <person name="Hughes B."/>
            <person name="Huizar L."/>
            <person name="Hunter J.L."/>
            <person name="Jenkins J."/>
            <person name="Johnson-Hopson C."/>
            <person name="Khan S."/>
            <person name="Khaykin E."/>
            <person name="Kim C.J."/>
            <person name="Koo H.L."/>
            <person name="Kremenetskaia I."/>
            <person name="Kurtz D.B."/>
            <person name="Kwan A."/>
            <person name="Lam B."/>
            <person name="Langin-Hooper S."/>
            <person name="Lee A."/>
            <person name="Lee J.M."/>
            <person name="Lenz C.A."/>
            <person name="Li J.H."/>
            <person name="Li Y.-P."/>
            <person name="Lin X."/>
            <person name="Liu S.X."/>
            <person name="Liu Z.A."/>
            <person name="Luros J.S."/>
            <person name="Maiti R."/>
            <person name="Marziali A."/>
            <person name="Militscher J."/>
            <person name="Miranda M."/>
            <person name="Nguyen M."/>
            <person name="Nierman W.C."/>
            <person name="Osborne B.I."/>
            <person name="Pai G."/>
            <person name="Peterson J."/>
            <person name="Pham P.K."/>
            <person name="Rizzo M."/>
            <person name="Rooney T."/>
            <person name="Rowley D."/>
            <person name="Sakano H."/>
            <person name="Salzberg S.L."/>
            <person name="Schwartz J.R."/>
            <person name="Shinn P."/>
            <person name="Southwick A.M."/>
            <person name="Sun H."/>
            <person name="Tallon L.J."/>
            <person name="Tambunga G."/>
            <person name="Toriumi M.J."/>
            <person name="Town C.D."/>
            <person name="Utterback T."/>
            <person name="Van Aken S."/>
            <person name="Vaysberg M."/>
            <person name="Vysotskaia V.S."/>
            <person name="Walker M."/>
            <person name="Wu D."/>
            <person name="Yu G."/>
            <person name="Fraser C.M."/>
            <person name="Venter J.C."/>
            <person name="Davis R.W."/>
        </authorList>
    </citation>
    <scope>NUCLEOTIDE SEQUENCE [LARGE SCALE GENOMIC DNA]</scope>
    <source>
        <strain>cv. Columbia</strain>
    </source>
</reference>
<reference key="2">
    <citation type="journal article" date="2017" name="Plant J.">
        <title>Araport11: a complete reannotation of the Arabidopsis thaliana reference genome.</title>
        <authorList>
            <person name="Cheng C.Y."/>
            <person name="Krishnakumar V."/>
            <person name="Chan A.P."/>
            <person name="Thibaud-Nissen F."/>
            <person name="Schobel S."/>
            <person name="Town C.D."/>
        </authorList>
    </citation>
    <scope>GENOME REANNOTATION</scope>
    <source>
        <strain>cv. Columbia</strain>
    </source>
</reference>
<reference key="3">
    <citation type="journal article" date="2010" name="Metallomics">
        <title>Metallochaperone-like genes in Arabidopsis thaliana.</title>
        <authorList>
            <person name="Tehseen M."/>
            <person name="Cairns N."/>
            <person name="Sherson S."/>
            <person name="Cobbett C.S."/>
        </authorList>
    </citation>
    <scope>GENE FAMILY</scope>
    <scope>NOMENCLATURE</scope>
</reference>
<reference key="4">
    <citation type="journal article" date="2013" name="FEBS J.">
        <title>Heavy metal-associated isoprenylated plant protein (HIPP): characterization of a family of proteins exclusive to plants.</title>
        <authorList>
            <person name="de Abreu-Neto J.B."/>
            <person name="Turchetto-Zolet A.C."/>
            <person name="de Oliveira L.F."/>
            <person name="Zanettini M.H."/>
            <person name="Margis-Pinheiro M."/>
        </authorList>
    </citation>
    <scope>GENE FAMILY</scope>
    <scope>NOMENCLATURE</scope>
</reference>
<organism evidence="11">
    <name type="scientific">Arabidopsis thaliana</name>
    <name type="common">Mouse-ear cress</name>
    <dbReference type="NCBI Taxonomy" id="3702"/>
    <lineage>
        <taxon>Eukaryota</taxon>
        <taxon>Viridiplantae</taxon>
        <taxon>Streptophyta</taxon>
        <taxon>Embryophyta</taxon>
        <taxon>Tracheophyta</taxon>
        <taxon>Spermatophyta</taxon>
        <taxon>Magnoliopsida</taxon>
        <taxon>eudicotyledons</taxon>
        <taxon>Gunneridae</taxon>
        <taxon>Pentapetalae</taxon>
        <taxon>rosids</taxon>
        <taxon>malvids</taxon>
        <taxon>Brassicales</taxon>
        <taxon>Brassicaceae</taxon>
        <taxon>Camelineae</taxon>
        <taxon>Arabidopsis</taxon>
    </lineage>
</organism>
<comment type="function">
    <text evidence="1">Heavy-metal-binding protein.</text>
</comment>
<comment type="similarity">
    <text evidence="6">Belongs to the HIPP family.</text>
</comment>
<comment type="sequence caution" evidence="6">
    <conflict type="erroneous gene model prediction">
        <sequence resource="EMBL-CDS" id="AAF79340"/>
    </conflict>
</comment>
<comment type="sequence caution" evidence="6">
    <conflict type="erroneous gene model prediction">
        <sequence resource="EMBL-CDS" id="AAF79341"/>
    </conflict>
</comment>
<comment type="sequence caution" evidence="6">
    <conflict type="erroneous gene model prediction">
        <sequence resource="EMBL-CDS" id="AAF79501"/>
    </conflict>
</comment>
<comment type="sequence caution" evidence="6">
    <conflict type="erroneous gene model prediction">
        <sequence resource="EMBL-CDS" id="AEE33296"/>
    </conflict>
</comment>
<accession>F4I1X0</accession>
<accession>A0A2H1ZEE4</accession>
<accession>F4I1X1</accession>
<accession>Q9LFZ4</accession>
<accession>Q9LG34</accession>
<accession>Q9LG35</accession>
<gene>
    <name evidence="4 5" type="primary">HIPP41</name>
    <name evidence="7" type="ordered locus">At1g55790</name>
    <name evidence="9" type="ORF">F14J16.2</name>
    <name evidence="8" type="ORF">F14J16.3</name>
    <name evidence="10" type="ORF">F20N2.17</name>
</gene>
<evidence type="ECO:0000250" key="1">
    <source>
        <dbReference type="UniProtKB" id="Q9LZF1"/>
    </source>
</evidence>
<evidence type="ECO:0000250" key="2">
    <source>
        <dbReference type="UniProtKB" id="Q9SZN7"/>
    </source>
</evidence>
<evidence type="ECO:0000255" key="3">
    <source>
        <dbReference type="PROSITE-ProRule" id="PRU00280"/>
    </source>
</evidence>
<evidence type="ECO:0000303" key="4">
    <source>
    </source>
</evidence>
<evidence type="ECO:0000303" key="5">
    <source>
    </source>
</evidence>
<evidence type="ECO:0000305" key="6"/>
<evidence type="ECO:0000312" key="7">
    <source>
        <dbReference type="Araport" id="AT1G55790"/>
    </source>
</evidence>
<evidence type="ECO:0000312" key="8">
    <source>
        <dbReference type="EMBL" id="AAF79340.1"/>
    </source>
</evidence>
<evidence type="ECO:0000312" key="9">
    <source>
        <dbReference type="EMBL" id="AAF79341.1"/>
    </source>
</evidence>
<evidence type="ECO:0000312" key="10">
    <source>
        <dbReference type="EMBL" id="AAF79501.1"/>
    </source>
</evidence>
<evidence type="ECO:0000312" key="11">
    <source>
        <dbReference type="Proteomes" id="UP000006548"/>
    </source>
</evidence>
<protein>
    <recommendedName>
        <fullName evidence="4 5">Heavy metal-associated isoprenylated plant protein 41</fullName>
        <shortName evidence="4 5">AtHIP41</shortName>
    </recommendedName>
</protein>
<keyword id="KW-0449">Lipoprotein</keyword>
<keyword id="KW-0479">Metal-binding</keyword>
<keyword id="KW-0488">Methylation</keyword>
<keyword id="KW-0636">Prenylation</keyword>
<keyword id="KW-1185">Reference proteome</keyword>
<proteinExistence type="inferred from homology"/>
<feature type="chain" id="PRO_0000437855" description="Heavy metal-associated isoprenylated plant protein 41">
    <location>
        <begin position="1"/>
        <end position="512"/>
    </location>
</feature>
<feature type="propeptide" id="PRO_0000437856" description="Removed in mature form" evidence="6">
    <location>
        <begin position="513"/>
        <end position="515"/>
    </location>
</feature>
<feature type="domain" description="HMA" evidence="3">
    <location>
        <begin position="376"/>
        <end position="444"/>
    </location>
</feature>
<feature type="modified residue" description="Cysteine methyl ester" evidence="2">
    <location>
        <position position="512"/>
    </location>
</feature>
<feature type="lipid moiety-binding region" description="S-farnesyl cysteine" evidence="2">
    <location>
        <position position="512"/>
    </location>
</feature>